<evidence type="ECO:0000255" key="1">
    <source>
        <dbReference type="PROSITE-ProRule" id="PRU00498"/>
    </source>
</evidence>
<evidence type="ECO:0000269" key="2">
    <source>
    </source>
</evidence>
<evidence type="ECO:0000303" key="3">
    <source>
    </source>
</evidence>
<evidence type="ECO:0000305" key="4"/>
<sequence length="559" mass="59232">MAMSLKKIGAIAVGGAMVASALASGVMAATTSGDVAGFMKNAIKEDGTPNVDIVVGSGAAVMDVVSAADVAAKIGSMAYKTGVVEDRSAVVKVSAKAESDDVNIFTLNATNEDIALVAAADSDYAKGFINGSDQLKVTDQLASGSIQDVNDADFNATSLGDVSTMLKVPDIDPSDWYSNDDDAGEVVFTRIVYDSDKLSIDEDQILYASIAYKNDEDVFNDNNTVTLKPGMRIPFLGEEYAVVKIDDEDDIIYLGKEAKDGVLKEGEXFAVGNGYEVKIASILKSGDTSTEYSVNVQILKDGKVVKEKTDTVGGSSSAQLKLAYKDVGVVVNDAWEDIAGTTGYAEVLITKDTKALELGEEYIPDWEAYAALNNSDKLEIKKDITESDKANIIGIALKYVGDKKKKLGDRDEVDIANYLKLVFDDEDKNDVLKVKFLMDESKEVTLDIGQKATVLNAEVRLKDILADAQQSVKLTAPIAKLDSEVSLDTADKNLILVGGPVVNALTKELVDAGKVAIDNTSPATLAVVEGAANGNDVLVVAGGDREATREAAKALLEMI</sequence>
<protein>
    <recommendedName>
        <fullName evidence="3">S-layer protein</fullName>
    </recommendedName>
    <alternativeName>
        <fullName evidence="4">Cell surface glycoprotein</fullName>
    </alternativeName>
</protein>
<proteinExistence type="evidence at protein level"/>
<name>CSG_METTL</name>
<gene>
    <name evidence="3" type="primary">slmt1</name>
</gene>
<reference key="1">
    <citation type="journal article" date="2002" name="Extremophiles">
        <title>Genes and derived amino acid sequences of S-layer proteins from mesophilic, thermophilic, and extremely thermophilic methanococci.</title>
        <authorList>
            <person name="Akca E."/>
            <person name="Claus H."/>
            <person name="Schultz N."/>
            <person name="Karbach G."/>
            <person name="Schlott B."/>
            <person name="Debaerdemaeker T."/>
            <person name="Declercq J.P."/>
            <person name="Konig H."/>
        </authorList>
    </citation>
    <scope>NUCLEOTIDE SEQUENCE [GENOMIC DNA]</scope>
    <scope>PROTEIN SEQUENCE OF 29-45</scope>
    <scope>FUNCTION</scope>
    <scope>SUBCELLULAR LOCATION</scope>
    <source>
        <strain>ATCC 35097 / DSM 2095 / JCM 10549 / OCM 138 / SN-1</strain>
    </source>
</reference>
<keyword id="KW-0134">Cell wall</keyword>
<keyword id="KW-0961">Cell wall biogenesis/degradation</keyword>
<keyword id="KW-0903">Direct protein sequencing</keyword>
<keyword id="KW-0325">Glycoprotein</keyword>
<keyword id="KW-0701">S-layer</keyword>
<keyword id="KW-0964">Secreted</keyword>
<keyword id="KW-0732">Signal</keyword>
<comment type="function">
    <text evidence="2">S-layer protein. The S-layer is a paracrystalline mono-layered assembly of proteins which coat the surface of the cell.</text>
</comment>
<comment type="subcellular location">
    <subcellularLocation>
        <location evidence="2">Secreted</location>
        <location evidence="2">Cell wall</location>
        <location evidence="2">S-layer</location>
    </subcellularLocation>
</comment>
<comment type="similarity">
    <text evidence="4">Belongs to the Mj S-layer protein family.</text>
</comment>
<accession>Q8X235</accession>
<dbReference type="EMBL" id="AJ308554">
    <property type="protein sequence ID" value="CAC83952.2"/>
    <property type="molecule type" value="Genomic_DNA"/>
</dbReference>
<dbReference type="GlyCosmos" id="Q8X235">
    <property type="glycosylation" value="5 sites, No reported glycans"/>
</dbReference>
<dbReference type="GO" id="GO:0005576">
    <property type="term" value="C:extracellular region"/>
    <property type="evidence" value="ECO:0007669"/>
    <property type="project" value="UniProtKB-KW"/>
</dbReference>
<dbReference type="GO" id="GO:0030115">
    <property type="term" value="C:S-layer"/>
    <property type="evidence" value="ECO:0007669"/>
    <property type="project" value="UniProtKB-SubCell"/>
</dbReference>
<dbReference type="GO" id="GO:0071555">
    <property type="term" value="P:cell wall organization"/>
    <property type="evidence" value="ECO:0007669"/>
    <property type="project" value="UniProtKB-KW"/>
</dbReference>
<dbReference type="InterPro" id="IPR022651">
    <property type="entry name" value="S_layer_C"/>
</dbReference>
<dbReference type="InterPro" id="IPR022650">
    <property type="entry name" value="S_layer_central"/>
</dbReference>
<dbReference type="InterPro" id="IPR006454">
    <property type="entry name" value="S_layer_MJ"/>
</dbReference>
<dbReference type="NCBIfam" id="TIGR01564">
    <property type="entry name" value="S_layer_MJ"/>
    <property type="match status" value="1"/>
</dbReference>
<dbReference type="Pfam" id="PF05124">
    <property type="entry name" value="S_layer_C"/>
    <property type="match status" value="1"/>
</dbReference>
<dbReference type="Pfam" id="PF05123">
    <property type="entry name" value="S_layer_N"/>
    <property type="match status" value="1"/>
</dbReference>
<feature type="signal peptide" evidence="2">
    <location>
        <begin position="1"/>
        <end position="28"/>
    </location>
</feature>
<feature type="chain" id="PRO_0000444301" description="S-layer protein">
    <location>
        <begin position="29"/>
        <end position="559"/>
    </location>
</feature>
<feature type="glycosylation site" description="N-linked (GlcNAc...) asparagine" evidence="1">
    <location>
        <position position="108"/>
    </location>
</feature>
<feature type="glycosylation site" description="N-linked (GlcNAc...) asparagine" evidence="1">
    <location>
        <position position="130"/>
    </location>
</feature>
<feature type="glycosylation site" description="N-linked (GlcNAc...) asparagine" evidence="1">
    <location>
        <position position="155"/>
    </location>
</feature>
<feature type="glycosylation site" description="N-linked (GlcNAc...) asparagine" evidence="1">
    <location>
        <position position="222"/>
    </location>
</feature>
<feature type="glycosylation site" description="N-linked (GlcNAc...) asparagine" evidence="1">
    <location>
        <position position="373"/>
    </location>
</feature>
<organism>
    <name type="scientific">Methanothermococcus thermolithotrophicus</name>
    <name type="common">Methanococcus thermolithotrophicus</name>
    <dbReference type="NCBI Taxonomy" id="2186"/>
    <lineage>
        <taxon>Archaea</taxon>
        <taxon>Methanobacteriati</taxon>
        <taxon>Methanobacteriota</taxon>
        <taxon>Methanomada group</taxon>
        <taxon>Methanococci</taxon>
        <taxon>Methanococcales</taxon>
        <taxon>Methanococcaceae</taxon>
        <taxon>Methanothermococcus</taxon>
    </lineage>
</organism>